<feature type="chain" id="PRO_0000368718" description="ATP synthase subunit b 1">
    <location>
        <begin position="1"/>
        <end position="246"/>
    </location>
</feature>
<feature type="transmembrane region" description="Helical" evidence="1">
    <location>
        <begin position="5"/>
        <end position="27"/>
    </location>
</feature>
<comment type="function">
    <text evidence="1">F(1)F(0) ATP synthase produces ATP from ADP in the presence of a proton or sodium gradient. F-type ATPases consist of two structural domains, F(1) containing the extramembraneous catalytic core and F(0) containing the membrane proton channel, linked together by a central stalk and a peripheral stalk. During catalysis, ATP synthesis in the catalytic domain of F(1) is coupled via a rotary mechanism of the central stalk subunits to proton translocation.</text>
</comment>
<comment type="function">
    <text evidence="1">Component of the F(0) channel, it forms part of the peripheral stalk, linking F(1) to F(0).</text>
</comment>
<comment type="subunit">
    <text evidence="1">F-type ATPases have 2 components, F(1) - the catalytic core - and F(0) - the membrane proton channel. F(1) has five subunits: alpha(3), beta(3), gamma(1), delta(1), epsilon(1). F(0) has three main subunits: a(1), b(2) and c(10-14). The alpha and beta chains form an alternating ring which encloses part of the gamma chain. F(1) is attached to F(0) by a central stalk formed by the gamma and epsilon chains, while a peripheral stalk is formed by the delta and b chains.</text>
</comment>
<comment type="subcellular location">
    <subcellularLocation>
        <location evidence="1">Cell inner membrane</location>
        <topology evidence="1">Single-pass membrane protein</topology>
    </subcellularLocation>
</comment>
<comment type="similarity">
    <text evidence="1">Belongs to the ATPase B chain family.</text>
</comment>
<evidence type="ECO:0000255" key="1">
    <source>
        <dbReference type="HAMAP-Rule" id="MF_01398"/>
    </source>
</evidence>
<protein>
    <recommendedName>
        <fullName evidence="1">ATP synthase subunit b 1</fullName>
    </recommendedName>
    <alternativeName>
        <fullName evidence="1">ATP synthase F(0) sector subunit b 1</fullName>
    </alternativeName>
    <alternativeName>
        <fullName evidence="1">ATPase subunit I 1</fullName>
    </alternativeName>
    <alternativeName>
        <fullName evidence="1">F-type ATPase subunit b 1</fullName>
        <shortName evidence="1">F-ATPase subunit b 1</shortName>
    </alternativeName>
</protein>
<proteinExistence type="inferred from homology"/>
<gene>
    <name evidence="1" type="primary">atpF1</name>
    <name type="ordered locus">RB4915</name>
</gene>
<name>ATPF1_RHOBA</name>
<keyword id="KW-0066">ATP synthesis</keyword>
<keyword id="KW-0997">Cell inner membrane</keyword>
<keyword id="KW-1003">Cell membrane</keyword>
<keyword id="KW-0138">CF(0)</keyword>
<keyword id="KW-0375">Hydrogen ion transport</keyword>
<keyword id="KW-0406">Ion transport</keyword>
<keyword id="KW-0472">Membrane</keyword>
<keyword id="KW-1185">Reference proteome</keyword>
<keyword id="KW-0812">Transmembrane</keyword>
<keyword id="KW-1133">Transmembrane helix</keyword>
<keyword id="KW-0813">Transport</keyword>
<accession>Q7UH06</accession>
<dbReference type="EMBL" id="BX294141">
    <property type="protein sequence ID" value="CAD78173.1"/>
    <property type="molecule type" value="Genomic_DNA"/>
</dbReference>
<dbReference type="RefSeq" id="NP_866392.1">
    <property type="nucleotide sequence ID" value="NC_005027.1"/>
</dbReference>
<dbReference type="RefSeq" id="WP_011120169.1">
    <property type="nucleotide sequence ID" value="NC_005027.1"/>
</dbReference>
<dbReference type="SMR" id="Q7UH06"/>
<dbReference type="STRING" id="243090.RB4915"/>
<dbReference type="EnsemblBacteria" id="CAD78173">
    <property type="protein sequence ID" value="CAD78173"/>
    <property type="gene ID" value="RB4915"/>
</dbReference>
<dbReference type="KEGG" id="rba:RB4915"/>
<dbReference type="PATRIC" id="fig|243090.15.peg.2339"/>
<dbReference type="eggNOG" id="COG0711">
    <property type="taxonomic scope" value="Bacteria"/>
</dbReference>
<dbReference type="HOGENOM" id="CLU_070737_0_0_0"/>
<dbReference type="InParanoid" id="Q7UH06"/>
<dbReference type="OrthoDB" id="282095at2"/>
<dbReference type="Proteomes" id="UP000001025">
    <property type="component" value="Chromosome"/>
</dbReference>
<dbReference type="GO" id="GO:0005886">
    <property type="term" value="C:plasma membrane"/>
    <property type="evidence" value="ECO:0007669"/>
    <property type="project" value="UniProtKB-SubCell"/>
</dbReference>
<dbReference type="GO" id="GO:0045259">
    <property type="term" value="C:proton-transporting ATP synthase complex"/>
    <property type="evidence" value="ECO:0007669"/>
    <property type="project" value="UniProtKB-KW"/>
</dbReference>
<dbReference type="GO" id="GO:0046933">
    <property type="term" value="F:proton-transporting ATP synthase activity, rotational mechanism"/>
    <property type="evidence" value="ECO:0007669"/>
    <property type="project" value="UniProtKB-UniRule"/>
</dbReference>
<dbReference type="CDD" id="cd06503">
    <property type="entry name" value="ATP-synt_Fo_b"/>
    <property type="match status" value="1"/>
</dbReference>
<dbReference type="HAMAP" id="MF_01398">
    <property type="entry name" value="ATP_synth_b_bprime"/>
    <property type="match status" value="1"/>
</dbReference>
<dbReference type="InterPro" id="IPR017707">
    <property type="entry name" value="Alt_ATP_synth_F0_bsu"/>
</dbReference>
<dbReference type="InterPro" id="IPR002146">
    <property type="entry name" value="ATP_synth_b/b'su_bac/chlpt"/>
</dbReference>
<dbReference type="InterPro" id="IPR050059">
    <property type="entry name" value="ATP_synthase_B_chain"/>
</dbReference>
<dbReference type="InterPro" id="IPR000711">
    <property type="entry name" value="ATPase_OSCP/dsu"/>
</dbReference>
<dbReference type="NCBIfam" id="TIGR03321">
    <property type="entry name" value="alt_F1F0_F0_B"/>
    <property type="match status" value="1"/>
</dbReference>
<dbReference type="PANTHER" id="PTHR33445">
    <property type="entry name" value="ATP SYNTHASE SUBUNIT B', CHLOROPLASTIC"/>
    <property type="match status" value="1"/>
</dbReference>
<dbReference type="PANTHER" id="PTHR33445:SF2">
    <property type="entry name" value="ATP SYNTHASE SUBUNIT B', CHLOROPLASTIC"/>
    <property type="match status" value="1"/>
</dbReference>
<dbReference type="Pfam" id="PF00430">
    <property type="entry name" value="ATP-synt_B"/>
    <property type="match status" value="1"/>
</dbReference>
<dbReference type="Pfam" id="PF00213">
    <property type="entry name" value="OSCP"/>
    <property type="match status" value="1"/>
</dbReference>
<sequence length="246" mass="28161">MSIDWFTFTAQVINFLVLVGLLRYFLYAPIVRAMQAREQKVTQCLTDAETAKVEANQQRMSLEKQTQLLQERREELLTKAKADADNERQRLIAEARKEADTRREHWTSTFERDQKDLADQTRRDIQRMGFQAARETVQQLADEDLQKRVCQTFVKQLQTLGEDQLAAIATQLADSGNPVLVRSAKGLDSSDQNQIRDAIHRVFENKVEVRFESEPALIAGIEMDAGGYSLPWNAERTLKTMEANVA</sequence>
<organism>
    <name type="scientific">Rhodopirellula baltica (strain DSM 10527 / NCIMB 13988 / SH1)</name>
    <dbReference type="NCBI Taxonomy" id="243090"/>
    <lineage>
        <taxon>Bacteria</taxon>
        <taxon>Pseudomonadati</taxon>
        <taxon>Planctomycetota</taxon>
        <taxon>Planctomycetia</taxon>
        <taxon>Pirellulales</taxon>
        <taxon>Pirellulaceae</taxon>
        <taxon>Rhodopirellula</taxon>
    </lineage>
</organism>
<reference key="1">
    <citation type="journal article" date="2003" name="Proc. Natl. Acad. Sci. U.S.A.">
        <title>Complete genome sequence of the marine planctomycete Pirellula sp. strain 1.</title>
        <authorList>
            <person name="Gloeckner F.O."/>
            <person name="Kube M."/>
            <person name="Bauer M."/>
            <person name="Teeling H."/>
            <person name="Lombardot T."/>
            <person name="Ludwig W."/>
            <person name="Gade D."/>
            <person name="Beck A."/>
            <person name="Borzym K."/>
            <person name="Heitmann K."/>
            <person name="Rabus R."/>
            <person name="Schlesner H."/>
            <person name="Amann R."/>
            <person name="Reinhardt R."/>
        </authorList>
    </citation>
    <scope>NUCLEOTIDE SEQUENCE [LARGE SCALE GENOMIC DNA]</scope>
    <source>
        <strain>DSM 10527 / NCIMB 13988 / SH1</strain>
    </source>
</reference>